<proteinExistence type="evidence at protein level"/>
<gene>
    <name type="primary">C1qbp</name>
    <name type="synonym">Gc1qbp</name>
</gene>
<feature type="transit peptide" description="Mitochondrion" evidence="1">
    <location>
        <begin position="1"/>
        <end position="71"/>
    </location>
</feature>
<feature type="chain" id="PRO_0000018592" description="Complement component 1 Q subcomponent-binding protein, mitochondrial">
    <location>
        <begin position="72"/>
        <end position="279"/>
    </location>
</feature>
<feature type="region of interest" description="C1q binding" evidence="1">
    <location>
        <begin position="74"/>
        <end position="91"/>
    </location>
</feature>
<feature type="region of interest" description="Disordered" evidence="4">
    <location>
        <begin position="134"/>
        <end position="162"/>
    </location>
</feature>
<feature type="region of interest" description="Interaction with MAVS" evidence="1">
    <location>
        <begin position="166"/>
        <end position="210"/>
    </location>
</feature>
<feature type="modified residue" description="N6-acetyllysine" evidence="3">
    <location>
        <position position="89"/>
    </location>
</feature>
<feature type="modified residue" description="N6-acetyllysine" evidence="2">
    <location>
        <position position="92"/>
    </location>
</feature>
<feature type="modified residue" description="Phosphotyrosine" evidence="3">
    <location>
        <position position="185"/>
    </location>
</feature>
<feature type="modified residue" description="Phosphoserine" evidence="3">
    <location>
        <position position="198"/>
    </location>
</feature>
<feature type="modified residue" description="Phosphoserine" evidence="3">
    <location>
        <position position="202"/>
    </location>
</feature>
<feature type="modified residue" description="Phosphothreonine" evidence="3">
    <location>
        <position position="211"/>
    </location>
</feature>
<feature type="sequence conflict" description="In Ref. 1; CAA04531." evidence="7" ref="1">
    <original>VP</original>
    <variation>GS</variation>
    <location>
        <begin position="63"/>
        <end position="64"/>
    </location>
</feature>
<feature type="sequence conflict" description="In Ref. 1; CAA04531." evidence="7" ref="1">
    <original>GCG</original>
    <variation>AA</variation>
    <location>
        <begin position="68"/>
        <end position="70"/>
    </location>
</feature>
<feature type="sequence conflict" description="In Ref. 1; CAA04531." evidence="7" ref="1">
    <original>W</original>
    <variation>G</variation>
    <location>
        <position position="107"/>
    </location>
</feature>
<feature type="sequence conflict" description="In Ref. 1; CAA04531." evidence="7" ref="1">
    <original>E</original>
    <variation>Q</variation>
    <location>
        <position position="193"/>
    </location>
</feature>
<comment type="function">
    <text evidence="2 3">Multifunctional and multicompartmental protein involved in inflammation and infection processes, ribosome biogenesis, protein synthesis in mitochondria, regulation of apoptosis, transcriptional regulation and pre-mRNA splicing. At the cell surface is thought to act as an endothelial receptor for plasma proteins of the complement and kallikrein-kinin cascades. Putative receptor for C1q; specifically binds to the globular 'heads' of C1q thus inhibiting C1; may perform the receptor function through a complex with C1qR/CD93. In complex with cytokeratin-1/KRT1 is a high affinity receptor for kininogen-1/HMWK. Can also bind other plasma proteins, such as coagulation factor XII leading to its autoactivation. May function to bind initially fluid kininogen-1 to the cell membrane. The secreted form may enhance both extrinsic and intrinsic coagulation pathways. It is postulated that the cell surface form requires docking with transmembrane proteins for downstream signaling which might be specific for a cell-type or response. By acting as C1q receptor is involved in chemotaxis of immature dendritic cells and neutrophils and is proposed to signal through CD209/DC-SIGN on immature dendritic cells, through integrin alpha-4/beta-1 during trophoblast invasion of the decidua, and through integrin beta-1 during endothelial cell adhesion and spreading. Signaling involved in inhibition of innate immune response is implicating the PI3K-AKT/PKB pathway. Required for protein synthesis in mitochondria (By similarity). In mitochondrial translation may be involved in formation of functional 55S mitoribosomes; the function seems to involve its RNA-binding activity. Acts as a RNA modification reader, which specifically recognizes and binds mitochondrial RNAs modified by C5-methylcytosine (m5C) in response to stress, and promotes recruitment of the mitochondrial degradosome complex, leading to their degradation (By similarity). May be involved in the nucleolar ribosome maturation process; the function may involve the exchange of FBL for RRP1 in the association with pre-ribosome particles (By similarity). Involved in regulation of RNA splicing by inhibiting the RNA-binding capacity of SRSF1 and its phosphorylation (By similarity). Is required for the nuclear translocation of splicing factor U2AF1L4 (By similarity). Involved in regulation of CDKN2A- and HRK-mediated apoptosis. Stabilizes mitochondrial CDKN2A isoform smARF. May be involved in regulation of FOXC1 transcriptional activity and NFY/CCAAT-binding factor complex-mediated transcription. May play a role in antibacterial defense as it can bind to cell surface hyaluronan and inhibit Streptococcus pneumoniae hyaluronate lyase. May be involved in modulation of the immune response; ligation by HCV core protein is resulting in suppression of interleukin-12 production in monocyte-derived dendritic cells. Involved in regulation of antiviral response by inhibiting RIGI- and IFIH1-mediated signaling pathways probably involving its association with MAVS after viral infection. Acts as a regulator of DNA repair via homologous recombination by inhibiting the activity of MRE11: interacts with unphosphorylated MRE11 and RAD50 in absence of DNA damage, preventing formation and activity of the MRN complex. Following DNA damage, dissociates from phosphorylated MRE11, allowing formation of the MRN complex (By similarity).</text>
</comment>
<comment type="subunit">
    <text evidence="2 3 5">Homotrimer; three monomers form a donut-shaped structure with an unusually asymmetric charge distribution on the surface. Interacts with CDK13, HRK, VTN, NFYB, ADRA1B, FOXC1, DDX21, DDX50, NCL, SRSF1 and SRSF9. Interacts with CD93; the association may represent a cell surface C1q receptor. Interacts with KRT1; the association represents a cell surface kininogen receptor. Interacts with CD209; the interaction is indicative for a C1q:C1QBP:CD209 signaling complex. Interacts with FBL and RRP1; the respective interactions with C1QBP are competitive. Probably associates with the mitoribosome. Interacts with MAVS; the interaction occurs upon viral transfection. Interacts with PPIF. Interacts with U2AF1L4. Interacts with PLEKHN1. Interacts with VGF-derived peptide TLQP-21 (PubMed:24106277). Interacts with MRE11 and RAD50; forming the MRC (MRE11-RAD50-C1QBP) complex that inhibits the activity of MRE11 (By similarity).</text>
</comment>
<comment type="interaction">
    <interactant intactId="EBI-915544">
        <id>O35796</id>
    </interactant>
    <interactant intactId="EBI-6391008">
        <id>P18841</id>
        <label>ADRA1B</label>
    </interactant>
    <organismsDiffer>true</organismsDiffer>
    <experiments>5</experiments>
</comment>
<comment type="subcellular location">
    <subcellularLocation>
        <location evidence="3">Mitochondrion matrix</location>
    </subcellularLocation>
    <subcellularLocation>
        <location evidence="3">Nucleus</location>
    </subcellularLocation>
    <subcellularLocation>
        <location evidence="3">Cell membrane</location>
        <topology evidence="3">Peripheral membrane protein</topology>
        <orientation evidence="3">Extracellular side</orientation>
    </subcellularLocation>
    <subcellularLocation>
        <location evidence="3">Secreted</location>
    </subcellularLocation>
    <subcellularLocation>
        <location evidence="3">Cytoplasm</location>
    </subcellularLocation>
    <subcellularLocation>
        <location evidence="3">Nucleus</location>
        <location evidence="3">Nucleolus</location>
    </subcellularLocation>
    <text evidence="3">Seems to be predominantly localized to mitochondria. Secreted by activated lymphocytes.</text>
</comment>
<comment type="tissue specificity">
    <text evidence="6">Ubiquitous.</text>
</comment>
<comment type="similarity">
    <text evidence="7">Belongs to the MAM33 family.</text>
</comment>
<organism>
    <name type="scientific">Rattus norvegicus</name>
    <name type="common">Rat</name>
    <dbReference type="NCBI Taxonomy" id="10116"/>
    <lineage>
        <taxon>Eukaryota</taxon>
        <taxon>Metazoa</taxon>
        <taxon>Chordata</taxon>
        <taxon>Craniata</taxon>
        <taxon>Vertebrata</taxon>
        <taxon>Euteleostomi</taxon>
        <taxon>Mammalia</taxon>
        <taxon>Eutheria</taxon>
        <taxon>Euarchontoglires</taxon>
        <taxon>Glires</taxon>
        <taxon>Rodentia</taxon>
        <taxon>Myomorpha</taxon>
        <taxon>Muroidea</taxon>
        <taxon>Muridae</taxon>
        <taxon>Murinae</taxon>
        <taxon>Rattus</taxon>
    </lineage>
</organism>
<keyword id="KW-0007">Acetylation</keyword>
<keyword id="KW-1064">Adaptive immunity</keyword>
<keyword id="KW-0053">Apoptosis</keyword>
<keyword id="KW-1003">Cell membrane</keyword>
<keyword id="KW-0180">Complement pathway</keyword>
<keyword id="KW-0963">Cytoplasm</keyword>
<keyword id="KW-0903">Direct protein sequencing</keyword>
<keyword id="KW-0227">DNA damage</keyword>
<keyword id="KW-0391">Immunity</keyword>
<keyword id="KW-0399">Innate immunity</keyword>
<keyword id="KW-0472">Membrane</keyword>
<keyword id="KW-0496">Mitochondrion</keyword>
<keyword id="KW-0507">mRNA processing</keyword>
<keyword id="KW-0508">mRNA splicing</keyword>
<keyword id="KW-0539">Nucleus</keyword>
<keyword id="KW-0597">Phosphoprotein</keyword>
<keyword id="KW-1185">Reference proteome</keyword>
<keyword id="KW-0690">Ribosome biogenesis</keyword>
<keyword id="KW-0964">Secreted</keyword>
<keyword id="KW-0804">Transcription</keyword>
<keyword id="KW-0805">Transcription regulation</keyword>
<keyword id="KW-0809">Transit peptide</keyword>
<evidence type="ECO:0000250" key="1"/>
<evidence type="ECO:0000250" key="2">
    <source>
        <dbReference type="UniProtKB" id="O35658"/>
    </source>
</evidence>
<evidence type="ECO:0000250" key="3">
    <source>
        <dbReference type="UniProtKB" id="Q07021"/>
    </source>
</evidence>
<evidence type="ECO:0000256" key="4">
    <source>
        <dbReference type="SAM" id="MobiDB-lite"/>
    </source>
</evidence>
<evidence type="ECO:0000269" key="5">
    <source>
    </source>
</evidence>
<evidence type="ECO:0000269" key="6">
    <source>
    </source>
</evidence>
<evidence type="ECO:0000305" key="7"/>
<reference key="1">
    <citation type="journal article" date="1997" name="FEBS Lett.">
        <title>Characterisation of the rat and mouse homologues of gC1qBP, a 33 kDa glycoprotein that binds to the globular 'heads' of C1q.</title>
        <authorList>
            <person name="Lynch N.J."/>
            <person name="Reid K.B."/>
            <person name="van den Berg R.H."/>
            <person name="Daha M.R."/>
            <person name="Leigh L.A."/>
            <person name="Ghebrehiwet B."/>
            <person name="Lim W.B."/>
            <person name="Schwaeble W.J."/>
        </authorList>
    </citation>
    <scope>NUCLEOTIDE SEQUENCE [MRNA]</scope>
    <scope>TISSUE SPECIFICITY</scope>
    <source>
        <strain>Sprague-Dawley</strain>
        <tissue>Brain</tissue>
    </source>
</reference>
<reference key="2">
    <citation type="journal article" date="2004" name="Genome Res.">
        <title>The status, quality, and expansion of the NIH full-length cDNA project: the Mammalian Gene Collection (MGC).</title>
        <authorList>
            <consortium name="The MGC Project Team"/>
        </authorList>
    </citation>
    <scope>NUCLEOTIDE SEQUENCE [LARGE SCALE MRNA]</scope>
    <source>
        <tissue>Lung</tissue>
    </source>
</reference>
<reference key="3">
    <citation type="submission" date="2006-11" db="UniProtKB">
        <authorList>
            <person name="Lubec G."/>
            <person name="Afjehi-Sadat L."/>
        </authorList>
    </citation>
    <scope>PROTEIN SEQUENCE OF 205-217</scope>
    <scope>IDENTIFICATION BY MASS SPECTROMETRY</scope>
    <source>
        <strain>Sprague-Dawley</strain>
        <tissue>Spinal cord</tissue>
    </source>
</reference>
<reference key="4">
    <citation type="journal article" date="2013" name="J. Biol. Chem.">
        <title>Identification of a receptor for neuropeptide VGF and its role in neuropathic pain.</title>
        <authorList>
            <person name="Chen Y.C."/>
            <person name="Pristera A."/>
            <person name="Ayub M."/>
            <person name="Swanwick R.S."/>
            <person name="Karu K."/>
            <person name="Hamada Y."/>
            <person name="Rice A.S."/>
            <person name="Okuse K."/>
        </authorList>
    </citation>
    <scope>INTERACTION WITH VGF</scope>
</reference>
<sequence length="279" mass="30997">MLPLLRCVPRALGAAATGLRASIPAPPLRHLLQPAPRPCLRPFGLLSVRAGSARRSGLLQPPVPCACGCGALHTEGDKAFVEFLTDEIKEEKKIQKHKSLPKMSGDWELEVNGTEAKLLRKVAGEKITVTFNINNSIPPTFDGEEEPSQGQKAEEQEPELTSTPNFVVEVTKTDGKKTLVLDCHYPEDEIGHEDEAESDIFSIKEVSFQTTGDSEWRDTNYTLNTDSLDWALYDHLMDFLADRGVDNTFADELVELSTALEHQEYITFLEDLKSFVKSQ</sequence>
<accession>O35796</accession>
<accession>Q6IRS5</accession>
<dbReference type="EMBL" id="AJ001102">
    <property type="protein sequence ID" value="CAA04531.1"/>
    <property type="molecule type" value="mRNA"/>
</dbReference>
<dbReference type="EMBL" id="BC070510">
    <property type="protein sequence ID" value="AAH70510.1"/>
    <property type="molecule type" value="mRNA"/>
</dbReference>
<dbReference type="RefSeq" id="NP_062132.2">
    <property type="nucleotide sequence ID" value="NM_019259.2"/>
</dbReference>
<dbReference type="SMR" id="O35796"/>
<dbReference type="BioGRID" id="248302">
    <property type="interactions" value="4"/>
</dbReference>
<dbReference type="FunCoup" id="O35796">
    <property type="interactions" value="1829"/>
</dbReference>
<dbReference type="IntAct" id="O35796">
    <property type="interactions" value="10"/>
</dbReference>
<dbReference type="MINT" id="O35796"/>
<dbReference type="STRING" id="10116.ENSRNOP00000031020"/>
<dbReference type="GlyGen" id="O35796">
    <property type="glycosylation" value="1 site, 1 O-linked glycan (1 site)"/>
</dbReference>
<dbReference type="iPTMnet" id="O35796"/>
<dbReference type="PhosphoSitePlus" id="O35796"/>
<dbReference type="jPOST" id="O35796"/>
<dbReference type="PaxDb" id="10116-ENSRNOP00000031020"/>
<dbReference type="GeneID" id="29681"/>
<dbReference type="KEGG" id="rno:29681"/>
<dbReference type="UCSC" id="RGD:2230">
    <property type="organism name" value="rat"/>
</dbReference>
<dbReference type="AGR" id="RGD:2230"/>
<dbReference type="CTD" id="708"/>
<dbReference type="RGD" id="2230">
    <property type="gene designation" value="C1qbp"/>
</dbReference>
<dbReference type="VEuPathDB" id="HostDB:ENSRNOG00000006949"/>
<dbReference type="eggNOG" id="KOG4024">
    <property type="taxonomic scope" value="Eukaryota"/>
</dbReference>
<dbReference type="HOGENOM" id="CLU_083914_0_0_1"/>
<dbReference type="InParanoid" id="O35796"/>
<dbReference type="OrthoDB" id="278212at2759"/>
<dbReference type="PhylomeDB" id="O35796"/>
<dbReference type="TreeFam" id="TF315160"/>
<dbReference type="Reactome" id="R-RNO-140837">
    <property type="pathway name" value="Intrinsic Pathway of Fibrin Clot Formation"/>
</dbReference>
<dbReference type="Reactome" id="R-RNO-8980692">
    <property type="pathway name" value="RHOA GTPase cycle"/>
</dbReference>
<dbReference type="PRO" id="PR:O35796"/>
<dbReference type="Proteomes" id="UP000002494">
    <property type="component" value="Chromosome 10"/>
</dbReference>
<dbReference type="Bgee" id="ENSRNOG00000006949">
    <property type="expression patterns" value="Expressed in ovary and 20 other cell types or tissues"/>
</dbReference>
<dbReference type="GO" id="GO:0009986">
    <property type="term" value="C:cell surface"/>
    <property type="evidence" value="ECO:0000266"/>
    <property type="project" value="RGD"/>
</dbReference>
<dbReference type="GO" id="GO:0005737">
    <property type="term" value="C:cytoplasm"/>
    <property type="evidence" value="ECO:0000314"/>
    <property type="project" value="UniProtKB"/>
</dbReference>
<dbReference type="GO" id="GO:0005829">
    <property type="term" value="C:cytosol"/>
    <property type="evidence" value="ECO:0000266"/>
    <property type="project" value="RGD"/>
</dbReference>
<dbReference type="GO" id="GO:0005615">
    <property type="term" value="C:extracellular space"/>
    <property type="evidence" value="ECO:0000314"/>
    <property type="project" value="RGD"/>
</dbReference>
<dbReference type="GO" id="GO:0098982">
    <property type="term" value="C:GABA-ergic synapse"/>
    <property type="evidence" value="ECO:0000314"/>
    <property type="project" value="SynGO"/>
</dbReference>
<dbReference type="GO" id="GO:0098978">
    <property type="term" value="C:glutamatergic synapse"/>
    <property type="evidence" value="ECO:0000314"/>
    <property type="project" value="SynGO"/>
</dbReference>
<dbReference type="GO" id="GO:0016020">
    <property type="term" value="C:membrane"/>
    <property type="evidence" value="ECO:0000266"/>
    <property type="project" value="RGD"/>
</dbReference>
<dbReference type="GO" id="GO:0005759">
    <property type="term" value="C:mitochondrial matrix"/>
    <property type="evidence" value="ECO:0000266"/>
    <property type="project" value="RGD"/>
</dbReference>
<dbReference type="GO" id="GO:0005739">
    <property type="term" value="C:mitochondrion"/>
    <property type="evidence" value="ECO:0000266"/>
    <property type="project" value="RGD"/>
</dbReference>
<dbReference type="GO" id="GO:0005730">
    <property type="term" value="C:nucleolus"/>
    <property type="evidence" value="ECO:0007669"/>
    <property type="project" value="UniProtKB-SubCell"/>
</dbReference>
<dbReference type="GO" id="GO:0005634">
    <property type="term" value="C:nucleus"/>
    <property type="evidence" value="ECO:0000266"/>
    <property type="project" value="RGD"/>
</dbReference>
<dbReference type="GO" id="GO:0005886">
    <property type="term" value="C:plasma membrane"/>
    <property type="evidence" value="ECO:0000318"/>
    <property type="project" value="GO_Central"/>
</dbReference>
<dbReference type="GO" id="GO:0048786">
    <property type="term" value="C:presynaptic active zone"/>
    <property type="evidence" value="ECO:0000314"/>
    <property type="project" value="SynGO"/>
</dbReference>
<dbReference type="GO" id="GO:0031690">
    <property type="term" value="F:adrenergic receptor binding"/>
    <property type="evidence" value="ECO:0000314"/>
    <property type="project" value="UniProtKB"/>
</dbReference>
<dbReference type="GO" id="GO:0062153">
    <property type="term" value="F:C5-methylcytidine-containing RNA reader activity"/>
    <property type="evidence" value="ECO:0000266"/>
    <property type="project" value="RGD"/>
</dbReference>
<dbReference type="GO" id="GO:0001849">
    <property type="term" value="F:complement component C1q complex binding"/>
    <property type="evidence" value="ECO:0000314"/>
    <property type="project" value="RGD"/>
</dbReference>
<dbReference type="GO" id="GO:0060703">
    <property type="term" value="F:deoxyribonuclease inhibitor activity"/>
    <property type="evidence" value="ECO:0000266"/>
    <property type="project" value="RGD"/>
</dbReference>
<dbReference type="GO" id="GO:0004857">
    <property type="term" value="F:enzyme inhibitor activity"/>
    <property type="evidence" value="ECO:0000250"/>
    <property type="project" value="UniProtKB"/>
</dbReference>
<dbReference type="GO" id="GO:0005540">
    <property type="term" value="F:hyaluronic acid binding"/>
    <property type="evidence" value="ECO:0000250"/>
    <property type="project" value="UniProtKB"/>
</dbReference>
<dbReference type="GO" id="GO:0030984">
    <property type="term" value="F:kininogen binding"/>
    <property type="evidence" value="ECO:0000250"/>
    <property type="project" value="UniProtKB"/>
</dbReference>
<dbReference type="GO" id="GO:0097177">
    <property type="term" value="F:mitochondrial ribosome binding"/>
    <property type="evidence" value="ECO:0000250"/>
    <property type="project" value="UniProtKB"/>
</dbReference>
<dbReference type="GO" id="GO:0003729">
    <property type="term" value="F:mRNA binding"/>
    <property type="evidence" value="ECO:0000250"/>
    <property type="project" value="UniProtKB"/>
</dbReference>
<dbReference type="GO" id="GO:0005080">
    <property type="term" value="F:protein kinase C binding"/>
    <property type="evidence" value="ECO:0000314"/>
    <property type="project" value="RGD"/>
</dbReference>
<dbReference type="GO" id="GO:0003714">
    <property type="term" value="F:transcription corepressor activity"/>
    <property type="evidence" value="ECO:0000250"/>
    <property type="project" value="UniProtKB"/>
</dbReference>
<dbReference type="GO" id="GO:0006915">
    <property type="term" value="P:apoptotic process"/>
    <property type="evidence" value="ECO:0007669"/>
    <property type="project" value="UniProtKB-KW"/>
</dbReference>
<dbReference type="GO" id="GO:0006958">
    <property type="term" value="P:complement activation, classical pathway"/>
    <property type="evidence" value="ECO:0007669"/>
    <property type="project" value="UniProtKB-KW"/>
</dbReference>
<dbReference type="GO" id="GO:0042256">
    <property type="term" value="P:cytosolic ribosome assembly"/>
    <property type="evidence" value="ECO:0000250"/>
    <property type="project" value="UniProtKB"/>
</dbReference>
<dbReference type="GO" id="GO:0006974">
    <property type="term" value="P:DNA damage response"/>
    <property type="evidence" value="ECO:0007669"/>
    <property type="project" value="UniProtKB-KW"/>
</dbReference>
<dbReference type="GO" id="GO:0006955">
    <property type="term" value="P:immune response"/>
    <property type="evidence" value="ECO:0000304"/>
    <property type="project" value="RGD"/>
</dbReference>
<dbReference type="GO" id="GO:0045087">
    <property type="term" value="P:innate immune response"/>
    <property type="evidence" value="ECO:0007669"/>
    <property type="project" value="UniProtKB-KW"/>
</dbReference>
<dbReference type="GO" id="GO:0000957">
    <property type="term" value="P:mitochondrial RNA catabolic process"/>
    <property type="evidence" value="ECO:0000266"/>
    <property type="project" value="RGD"/>
</dbReference>
<dbReference type="GO" id="GO:0006397">
    <property type="term" value="P:mRNA processing"/>
    <property type="evidence" value="ECO:0007669"/>
    <property type="project" value="UniProtKB-KW"/>
</dbReference>
<dbReference type="GO" id="GO:0050687">
    <property type="term" value="P:negative regulation of defense response to virus"/>
    <property type="evidence" value="ECO:0000250"/>
    <property type="project" value="UniProtKB"/>
</dbReference>
<dbReference type="GO" id="GO:2000042">
    <property type="term" value="P:negative regulation of double-strand break repair via homologous recombination"/>
    <property type="evidence" value="ECO:0000250"/>
    <property type="project" value="UniProtKB"/>
</dbReference>
<dbReference type="GO" id="GO:0032695">
    <property type="term" value="P:negative regulation of interleukin-12 production"/>
    <property type="evidence" value="ECO:0000250"/>
    <property type="project" value="UniProtKB"/>
</dbReference>
<dbReference type="GO" id="GO:0039534">
    <property type="term" value="P:negative regulation of MDA-5 signaling pathway"/>
    <property type="evidence" value="ECO:0000250"/>
    <property type="project" value="UniProtKB"/>
</dbReference>
<dbReference type="GO" id="GO:0048025">
    <property type="term" value="P:negative regulation of mRNA splicing, via spliceosome"/>
    <property type="evidence" value="ECO:0000250"/>
    <property type="project" value="UniProtKB"/>
</dbReference>
<dbReference type="GO" id="GO:0039536">
    <property type="term" value="P:negative regulation of RIG-I signaling pathway"/>
    <property type="evidence" value="ECO:0000250"/>
    <property type="project" value="UniProtKB"/>
</dbReference>
<dbReference type="GO" id="GO:0000122">
    <property type="term" value="P:negative regulation of transcription by RNA polymerase II"/>
    <property type="evidence" value="ECO:0000250"/>
    <property type="project" value="UniProtKB"/>
</dbReference>
<dbReference type="GO" id="GO:0032689">
    <property type="term" value="P:negative regulation of type II interferon production"/>
    <property type="evidence" value="ECO:0000250"/>
    <property type="project" value="UniProtKB"/>
</dbReference>
<dbReference type="GO" id="GO:0043491">
    <property type="term" value="P:phosphatidylinositol 3-kinase/protein kinase B signal transduction"/>
    <property type="evidence" value="ECO:0000250"/>
    <property type="project" value="UniProtKB"/>
</dbReference>
<dbReference type="GO" id="GO:0043065">
    <property type="term" value="P:positive regulation of apoptotic process"/>
    <property type="evidence" value="ECO:0000250"/>
    <property type="project" value="UniProtKB"/>
</dbReference>
<dbReference type="GO" id="GO:0045785">
    <property type="term" value="P:positive regulation of cell adhesion"/>
    <property type="evidence" value="ECO:0000250"/>
    <property type="project" value="UniProtKB"/>
</dbReference>
<dbReference type="GO" id="GO:2000510">
    <property type="term" value="P:positive regulation of dendritic cell chemotaxis"/>
    <property type="evidence" value="ECO:0000250"/>
    <property type="project" value="UniProtKB"/>
</dbReference>
<dbReference type="GO" id="GO:0070131">
    <property type="term" value="P:positive regulation of mitochondrial translation"/>
    <property type="evidence" value="ECO:0000250"/>
    <property type="project" value="UniProtKB"/>
</dbReference>
<dbReference type="GO" id="GO:0090023">
    <property type="term" value="P:positive regulation of neutrophil chemotaxis"/>
    <property type="evidence" value="ECO:0000250"/>
    <property type="project" value="UniProtKB"/>
</dbReference>
<dbReference type="GO" id="GO:0051897">
    <property type="term" value="P:positive regulation of phosphatidylinositol 3-kinase/protein kinase B signal transduction"/>
    <property type="evidence" value="ECO:0000250"/>
    <property type="project" value="UniProtKB"/>
</dbReference>
<dbReference type="GO" id="GO:1900026">
    <property type="term" value="P:positive regulation of substrate adhesion-dependent cell spreading"/>
    <property type="evidence" value="ECO:0000250"/>
    <property type="project" value="UniProtKB"/>
</dbReference>
<dbReference type="GO" id="GO:1901165">
    <property type="term" value="P:positive regulation of trophoblast cell migration"/>
    <property type="evidence" value="ECO:0000250"/>
    <property type="project" value="UniProtKB"/>
</dbReference>
<dbReference type="GO" id="GO:0030449">
    <property type="term" value="P:regulation of complement activation"/>
    <property type="evidence" value="ECO:0000250"/>
    <property type="project" value="UniProtKB"/>
</dbReference>
<dbReference type="GO" id="GO:0008380">
    <property type="term" value="P:RNA splicing"/>
    <property type="evidence" value="ECO:0007669"/>
    <property type="project" value="UniProtKB-KW"/>
</dbReference>
<dbReference type="FunFam" id="3.10.280.10:FF:000001">
    <property type="entry name" value="Complement component 1 Q subcomponent-binding protein, mitochondrial"/>
    <property type="match status" value="1"/>
</dbReference>
<dbReference type="Gene3D" id="3.10.280.10">
    <property type="entry name" value="Mitochondrial glycoprotein"/>
    <property type="match status" value="1"/>
</dbReference>
<dbReference type="InterPro" id="IPR003428">
    <property type="entry name" value="MAM33"/>
</dbReference>
<dbReference type="InterPro" id="IPR036561">
    <property type="entry name" value="MAM33_sf"/>
</dbReference>
<dbReference type="PANTHER" id="PTHR10826">
    <property type="entry name" value="COMPLEMENT COMPONENT 1"/>
    <property type="match status" value="1"/>
</dbReference>
<dbReference type="PANTHER" id="PTHR10826:SF1">
    <property type="entry name" value="COMPLEMENT COMPONENT 1 Q SUBCOMPONENT-BINDING PROTEIN, MITOCHONDRIAL"/>
    <property type="match status" value="1"/>
</dbReference>
<dbReference type="Pfam" id="PF02330">
    <property type="entry name" value="MAM33"/>
    <property type="match status" value="1"/>
</dbReference>
<dbReference type="SUPFAM" id="SSF54529">
    <property type="entry name" value="Mitochondrial glycoprotein MAM33-like"/>
    <property type="match status" value="1"/>
</dbReference>
<protein>
    <recommendedName>
        <fullName>Complement component 1 Q subcomponent-binding protein, mitochondrial</fullName>
    </recommendedName>
    <alternativeName>
        <fullName>GC1q-R protein</fullName>
    </alternativeName>
    <alternativeName>
        <fullName>Glycoprotein gC1qBP</fullName>
        <shortName>C1qBP</shortName>
    </alternativeName>
</protein>
<name>C1QBP_RAT</name>